<reference key="1">
    <citation type="journal article" date="1999" name="Nature">
        <title>Sequence and analysis of chromosome 4 of the plant Arabidopsis thaliana.</title>
        <authorList>
            <person name="Mayer K.F.X."/>
            <person name="Schueller C."/>
            <person name="Wambutt R."/>
            <person name="Murphy G."/>
            <person name="Volckaert G."/>
            <person name="Pohl T."/>
            <person name="Duesterhoeft A."/>
            <person name="Stiekema W."/>
            <person name="Entian K.-D."/>
            <person name="Terryn N."/>
            <person name="Harris B."/>
            <person name="Ansorge W."/>
            <person name="Brandt P."/>
            <person name="Grivell L.A."/>
            <person name="Rieger M."/>
            <person name="Weichselgartner M."/>
            <person name="de Simone V."/>
            <person name="Obermaier B."/>
            <person name="Mache R."/>
            <person name="Mueller M."/>
            <person name="Kreis M."/>
            <person name="Delseny M."/>
            <person name="Puigdomenech P."/>
            <person name="Watson M."/>
            <person name="Schmidtheini T."/>
            <person name="Reichert B."/>
            <person name="Portetelle D."/>
            <person name="Perez-Alonso M."/>
            <person name="Boutry M."/>
            <person name="Bancroft I."/>
            <person name="Vos P."/>
            <person name="Hoheisel J."/>
            <person name="Zimmermann W."/>
            <person name="Wedler H."/>
            <person name="Ridley P."/>
            <person name="Langham S.-A."/>
            <person name="McCullagh B."/>
            <person name="Bilham L."/>
            <person name="Robben J."/>
            <person name="van der Schueren J."/>
            <person name="Grymonprez B."/>
            <person name="Chuang Y.-J."/>
            <person name="Vandenbussche F."/>
            <person name="Braeken M."/>
            <person name="Weltjens I."/>
            <person name="Voet M."/>
            <person name="Bastiaens I."/>
            <person name="Aert R."/>
            <person name="Defoor E."/>
            <person name="Weitzenegger T."/>
            <person name="Bothe G."/>
            <person name="Ramsperger U."/>
            <person name="Hilbert H."/>
            <person name="Braun M."/>
            <person name="Holzer E."/>
            <person name="Brandt A."/>
            <person name="Peters S."/>
            <person name="van Staveren M."/>
            <person name="Dirkse W."/>
            <person name="Mooijman P."/>
            <person name="Klein Lankhorst R."/>
            <person name="Rose M."/>
            <person name="Hauf J."/>
            <person name="Koetter P."/>
            <person name="Berneiser S."/>
            <person name="Hempel S."/>
            <person name="Feldpausch M."/>
            <person name="Lamberth S."/>
            <person name="Van den Daele H."/>
            <person name="De Keyser A."/>
            <person name="Buysshaert C."/>
            <person name="Gielen J."/>
            <person name="Villarroel R."/>
            <person name="De Clercq R."/>
            <person name="van Montagu M."/>
            <person name="Rogers J."/>
            <person name="Cronin A."/>
            <person name="Quail M.A."/>
            <person name="Bray-Allen S."/>
            <person name="Clark L."/>
            <person name="Doggett J."/>
            <person name="Hall S."/>
            <person name="Kay M."/>
            <person name="Lennard N."/>
            <person name="McLay K."/>
            <person name="Mayes R."/>
            <person name="Pettett A."/>
            <person name="Rajandream M.A."/>
            <person name="Lyne M."/>
            <person name="Benes V."/>
            <person name="Rechmann S."/>
            <person name="Borkova D."/>
            <person name="Bloecker H."/>
            <person name="Scharfe M."/>
            <person name="Grimm M."/>
            <person name="Loehnert T.-H."/>
            <person name="Dose S."/>
            <person name="de Haan M."/>
            <person name="Maarse A.C."/>
            <person name="Schaefer M."/>
            <person name="Mueller-Auer S."/>
            <person name="Gabel C."/>
            <person name="Fuchs M."/>
            <person name="Fartmann B."/>
            <person name="Granderath K."/>
            <person name="Dauner D."/>
            <person name="Herzl A."/>
            <person name="Neumann S."/>
            <person name="Argiriou A."/>
            <person name="Vitale D."/>
            <person name="Liguori R."/>
            <person name="Piravandi E."/>
            <person name="Massenet O."/>
            <person name="Quigley F."/>
            <person name="Clabauld G."/>
            <person name="Muendlein A."/>
            <person name="Felber R."/>
            <person name="Schnabl S."/>
            <person name="Hiller R."/>
            <person name="Schmidt W."/>
            <person name="Lecharny A."/>
            <person name="Aubourg S."/>
            <person name="Chefdor F."/>
            <person name="Cooke R."/>
            <person name="Berger C."/>
            <person name="Monfort A."/>
            <person name="Casacuberta E."/>
            <person name="Gibbons T."/>
            <person name="Weber N."/>
            <person name="Vandenbol M."/>
            <person name="Bargues M."/>
            <person name="Terol J."/>
            <person name="Torres A."/>
            <person name="Perez-Perez A."/>
            <person name="Purnelle B."/>
            <person name="Bent E."/>
            <person name="Johnson S."/>
            <person name="Tacon D."/>
            <person name="Jesse T."/>
            <person name="Heijnen L."/>
            <person name="Schwarz S."/>
            <person name="Scholler P."/>
            <person name="Heber S."/>
            <person name="Francs P."/>
            <person name="Bielke C."/>
            <person name="Frishman D."/>
            <person name="Haase D."/>
            <person name="Lemcke K."/>
            <person name="Mewes H.-W."/>
            <person name="Stocker S."/>
            <person name="Zaccaria P."/>
            <person name="Bevan M."/>
            <person name="Wilson R.K."/>
            <person name="de la Bastide M."/>
            <person name="Habermann K."/>
            <person name="Parnell L."/>
            <person name="Dedhia N."/>
            <person name="Gnoj L."/>
            <person name="Schutz K."/>
            <person name="Huang E."/>
            <person name="Spiegel L."/>
            <person name="Sekhon M."/>
            <person name="Murray J."/>
            <person name="Sheet P."/>
            <person name="Cordes M."/>
            <person name="Abu-Threideh J."/>
            <person name="Stoneking T."/>
            <person name="Kalicki J."/>
            <person name="Graves T."/>
            <person name="Harmon G."/>
            <person name="Edwards J."/>
            <person name="Latreille P."/>
            <person name="Courtney L."/>
            <person name="Cloud J."/>
            <person name="Abbott A."/>
            <person name="Scott K."/>
            <person name="Johnson D."/>
            <person name="Minx P."/>
            <person name="Bentley D."/>
            <person name="Fulton B."/>
            <person name="Miller N."/>
            <person name="Greco T."/>
            <person name="Kemp K."/>
            <person name="Kramer J."/>
            <person name="Fulton L."/>
            <person name="Mardis E."/>
            <person name="Dante M."/>
            <person name="Pepin K."/>
            <person name="Hillier L.W."/>
            <person name="Nelson J."/>
            <person name="Spieth J."/>
            <person name="Ryan E."/>
            <person name="Andrews S."/>
            <person name="Geisel C."/>
            <person name="Layman D."/>
            <person name="Du H."/>
            <person name="Ali J."/>
            <person name="Berghoff A."/>
            <person name="Jones K."/>
            <person name="Drone K."/>
            <person name="Cotton M."/>
            <person name="Joshu C."/>
            <person name="Antonoiu B."/>
            <person name="Zidanic M."/>
            <person name="Strong C."/>
            <person name="Sun H."/>
            <person name="Lamar B."/>
            <person name="Yordan C."/>
            <person name="Ma P."/>
            <person name="Zhong J."/>
            <person name="Preston R."/>
            <person name="Vil D."/>
            <person name="Shekher M."/>
            <person name="Matero A."/>
            <person name="Shah R."/>
            <person name="Swaby I.K."/>
            <person name="O'Shaughnessy A."/>
            <person name="Rodriguez M."/>
            <person name="Hoffman J."/>
            <person name="Till S."/>
            <person name="Granat S."/>
            <person name="Shohdy N."/>
            <person name="Hasegawa A."/>
            <person name="Hameed A."/>
            <person name="Lodhi M."/>
            <person name="Johnson A."/>
            <person name="Chen E."/>
            <person name="Marra M.A."/>
            <person name="Martienssen R."/>
            <person name="McCombie W.R."/>
        </authorList>
    </citation>
    <scope>NUCLEOTIDE SEQUENCE [LARGE SCALE GENOMIC DNA]</scope>
    <source>
        <strain>cv. Columbia</strain>
    </source>
</reference>
<reference key="2">
    <citation type="journal article" date="2017" name="Plant J.">
        <title>Araport11: a complete reannotation of the Arabidopsis thaliana reference genome.</title>
        <authorList>
            <person name="Cheng C.Y."/>
            <person name="Krishnakumar V."/>
            <person name="Chan A.P."/>
            <person name="Thibaud-Nissen F."/>
            <person name="Schobel S."/>
            <person name="Town C.D."/>
        </authorList>
    </citation>
    <scope>GENOME REANNOTATION</scope>
    <source>
        <strain>cv. Columbia</strain>
    </source>
</reference>
<reference key="3">
    <citation type="submission" date="2009-03" db="EMBL/GenBank/DDBJ databases">
        <title>ORF cloning and analysis of Arabidopsis transcription factor genes.</title>
        <authorList>
            <person name="Fujita M."/>
            <person name="Mizukado S."/>
            <person name="Seki M."/>
            <person name="Shinozaki K."/>
            <person name="Mitsuda N."/>
            <person name="Takiguchi Y."/>
            <person name="Takagi M."/>
        </authorList>
    </citation>
    <scope>NUCLEOTIDE SEQUENCE [LARGE SCALE GENOMIC DNA] OF 20-255</scope>
</reference>
<reference key="4">
    <citation type="journal article" date="2006" name="Proc. Natl. Acad. Sci. U.S.A.">
        <title>Cloning of DOG1, a quantitative trait locus controlling seed dormancy in Arabidopsis.</title>
        <authorList>
            <person name="Bentsink L."/>
            <person name="Jowett J."/>
            <person name="Hanhart C.J."/>
            <person name="Koornneef M."/>
        </authorList>
    </citation>
    <scope>GENE FAMILY</scope>
    <scope>NOMENCLATURE</scope>
    <scope>DISRUPTION PHENOTYPE</scope>
</reference>
<name>DOGL2_ARATH</name>
<feature type="chain" id="PRO_0000437687" description="Protein DOG1-like 2">
    <location>
        <begin position="1"/>
        <end position="255"/>
    </location>
</feature>
<feature type="domain" description="DOG1" evidence="1">
    <location>
        <begin position="10"/>
        <end position="246"/>
    </location>
</feature>
<evidence type="ECO:0000255" key="1">
    <source>
        <dbReference type="PROSITE-ProRule" id="PRU01147"/>
    </source>
</evidence>
<evidence type="ECO:0000269" key="2">
    <source>
    </source>
</evidence>
<evidence type="ECO:0000303" key="3">
    <source>
    </source>
</evidence>
<evidence type="ECO:0000305" key="4"/>
<evidence type="ECO:0000312" key="5">
    <source>
        <dbReference type="Araport" id="AT4G18680"/>
    </source>
</evidence>
<evidence type="ECO:0000312" key="6">
    <source>
        <dbReference type="EMBL" id="CAB37453.1"/>
    </source>
</evidence>
<accession>Q9SN45</accession>
<gene>
    <name evidence="3" type="primary">DOGL2</name>
    <name evidence="5" type="ordered locus">At4g18680</name>
    <name evidence="6" type="ORF">F28A21.90</name>
</gene>
<comment type="disruption phenotype">
    <text evidence="2">No germination phenotype.</text>
</comment>
<comment type="sequence caution" evidence="4">
    <conflict type="erroneous initiation">
        <sequence resource="EMBL-CDS" id="AEE84075"/>
    </conflict>
    <text>Truncated N-terminus.</text>
</comment>
<comment type="sequence caution" evidence="4">
    <conflict type="erroneous initiation">
        <sequence resource="EMBL-CDS" id="CAB37453"/>
    </conflict>
    <text>Truncated N-terminus.</text>
</comment>
<comment type="sequence caution" evidence="4">
    <conflict type="erroneous initiation">
        <sequence resource="EMBL-CDS" id="CAB78870"/>
    </conflict>
    <text>Truncated N-terminus.</text>
</comment>
<keyword id="KW-1185">Reference proteome</keyword>
<proteinExistence type="predicted"/>
<sequence>MERSSSYGVEKLQKRCYHEWMSLQTKHIDDLKEALMCQRNNDDKLEDLVGKIVNDYHTYAGKRSELSYRCCAHYFAPSWNTPIENSMLWMGGCRPSSFIRLIYALCGSQAETQLSQYLLKIDDDFDINHGGFMSDLTATQLGKLNDLHLEVIKKEDKITKTSANFQDDVADLPIADVVHADVAVEDALDKHEEGMAVLLAEADKLRFETLRKIVDVVTPLQAVEFLLAGKRLQLSLHDRGRVRADVCGGVGGAAV</sequence>
<organism>
    <name type="scientific">Arabidopsis thaliana</name>
    <name type="common">Mouse-ear cress</name>
    <dbReference type="NCBI Taxonomy" id="3702"/>
    <lineage>
        <taxon>Eukaryota</taxon>
        <taxon>Viridiplantae</taxon>
        <taxon>Streptophyta</taxon>
        <taxon>Embryophyta</taxon>
        <taxon>Tracheophyta</taxon>
        <taxon>Spermatophyta</taxon>
        <taxon>Magnoliopsida</taxon>
        <taxon>eudicotyledons</taxon>
        <taxon>Gunneridae</taxon>
        <taxon>Pentapetalae</taxon>
        <taxon>rosids</taxon>
        <taxon>malvids</taxon>
        <taxon>Brassicales</taxon>
        <taxon>Brassicaceae</taxon>
        <taxon>Camelineae</taxon>
        <taxon>Arabidopsis</taxon>
    </lineage>
</organism>
<dbReference type="EMBL" id="AL035526">
    <property type="protein sequence ID" value="CAB37453.1"/>
    <property type="status" value="ALT_INIT"/>
    <property type="molecule type" value="Genomic_DNA"/>
</dbReference>
<dbReference type="EMBL" id="AL161549">
    <property type="protein sequence ID" value="CAB78870.1"/>
    <property type="status" value="ALT_INIT"/>
    <property type="molecule type" value="Genomic_DNA"/>
</dbReference>
<dbReference type="EMBL" id="CP002687">
    <property type="protein sequence ID" value="AEE84075.1"/>
    <property type="status" value="ALT_INIT"/>
    <property type="molecule type" value="Genomic_DNA"/>
</dbReference>
<dbReference type="EMBL" id="AB493683">
    <property type="protein sequence ID" value="BAH30521.1"/>
    <property type="molecule type" value="Genomic_DNA"/>
</dbReference>
<dbReference type="PIR" id="T04860">
    <property type="entry name" value="T04860"/>
</dbReference>
<dbReference type="RefSeq" id="NP_193603.1">
    <property type="nucleotide sequence ID" value="NM_117984.1"/>
</dbReference>
<dbReference type="SMR" id="Q9SN45"/>
<dbReference type="STRING" id="3702.Q9SN45"/>
<dbReference type="PaxDb" id="3702-AT4G18680.1"/>
<dbReference type="PeptideAtlas" id="Q9SN45"/>
<dbReference type="ProteomicsDB" id="222132"/>
<dbReference type="GeneID" id="827602"/>
<dbReference type="KEGG" id="ath:AT4G18680"/>
<dbReference type="Araport" id="AT4G18680"/>
<dbReference type="TAIR" id="AT4G18680"/>
<dbReference type="eggNOG" id="ENOG502QW7X">
    <property type="taxonomic scope" value="Eukaryota"/>
</dbReference>
<dbReference type="HOGENOM" id="CLU_024782_2_2_1"/>
<dbReference type="InParanoid" id="Q9SN45"/>
<dbReference type="OrthoDB" id="542841at2759"/>
<dbReference type="PRO" id="PR:Q9SN45"/>
<dbReference type="Proteomes" id="UP000006548">
    <property type="component" value="Chromosome 4"/>
</dbReference>
<dbReference type="ExpressionAtlas" id="Q9SN45">
    <property type="expression patterns" value="baseline"/>
</dbReference>
<dbReference type="GO" id="GO:0043565">
    <property type="term" value="F:sequence-specific DNA binding"/>
    <property type="evidence" value="ECO:0007669"/>
    <property type="project" value="InterPro"/>
</dbReference>
<dbReference type="GO" id="GO:0006351">
    <property type="term" value="P:DNA-templated transcription"/>
    <property type="evidence" value="ECO:0007669"/>
    <property type="project" value="InterPro"/>
</dbReference>
<dbReference type="InterPro" id="IPR051886">
    <property type="entry name" value="Seed_Dev/Stress_Resp_Reg"/>
</dbReference>
<dbReference type="InterPro" id="IPR025422">
    <property type="entry name" value="TGA_domain"/>
</dbReference>
<dbReference type="PANTHER" id="PTHR46354">
    <property type="entry name" value="DOG1 DOMAIN-CONTAINING PROTEIN"/>
    <property type="match status" value="1"/>
</dbReference>
<dbReference type="PANTHER" id="PTHR46354:SF11">
    <property type="entry name" value="PROTEIN DOG1-LIKE 2-RELATED"/>
    <property type="match status" value="1"/>
</dbReference>
<dbReference type="Pfam" id="PF14144">
    <property type="entry name" value="DOG1"/>
    <property type="match status" value="1"/>
</dbReference>
<dbReference type="PROSITE" id="PS51806">
    <property type="entry name" value="DOG1"/>
    <property type="match status" value="1"/>
</dbReference>
<protein>
    <recommendedName>
        <fullName evidence="3">Protein DOG1-like 2</fullName>
    </recommendedName>
</protein>